<feature type="chain" id="PRO_0000148689" description="Argininosuccinate synthase">
    <location>
        <begin position="1"/>
        <end position="397"/>
    </location>
</feature>
<feature type="binding site" evidence="1">
    <location>
        <begin position="7"/>
        <end position="15"/>
    </location>
    <ligand>
        <name>ATP</name>
        <dbReference type="ChEBI" id="CHEBI:30616"/>
    </ligand>
</feature>
<feature type="binding site" evidence="1">
    <location>
        <position position="83"/>
    </location>
    <ligand>
        <name>L-citrulline</name>
        <dbReference type="ChEBI" id="CHEBI:57743"/>
    </ligand>
</feature>
<feature type="binding site" evidence="1">
    <location>
        <position position="113"/>
    </location>
    <ligand>
        <name>ATP</name>
        <dbReference type="ChEBI" id="CHEBI:30616"/>
    </ligand>
</feature>
<feature type="binding site" evidence="1">
    <location>
        <position position="115"/>
    </location>
    <ligand>
        <name>L-aspartate</name>
        <dbReference type="ChEBI" id="CHEBI:29991"/>
    </ligand>
</feature>
<feature type="binding site" evidence="1">
    <location>
        <position position="119"/>
    </location>
    <ligand>
        <name>L-aspartate</name>
        <dbReference type="ChEBI" id="CHEBI:29991"/>
    </ligand>
</feature>
<feature type="binding site" evidence="1">
    <location>
        <position position="119"/>
    </location>
    <ligand>
        <name>L-citrulline</name>
        <dbReference type="ChEBI" id="CHEBI:57743"/>
    </ligand>
</feature>
<feature type="binding site" evidence="1">
    <location>
        <position position="120"/>
    </location>
    <ligand>
        <name>L-aspartate</name>
        <dbReference type="ChEBI" id="CHEBI:29991"/>
    </ligand>
</feature>
<feature type="binding site" evidence="1">
    <location>
        <position position="123"/>
    </location>
    <ligand>
        <name>L-citrulline</name>
        <dbReference type="ChEBI" id="CHEBI:57743"/>
    </ligand>
</feature>
<feature type="binding site" evidence="1">
    <location>
        <position position="169"/>
    </location>
    <ligand>
        <name>L-citrulline</name>
        <dbReference type="ChEBI" id="CHEBI:57743"/>
    </ligand>
</feature>
<feature type="binding site" evidence="1">
    <location>
        <position position="178"/>
    </location>
    <ligand>
        <name>L-citrulline</name>
        <dbReference type="ChEBI" id="CHEBI:57743"/>
    </ligand>
</feature>
<feature type="binding site" evidence="1">
    <location>
        <position position="253"/>
    </location>
    <ligand>
        <name>L-citrulline</name>
        <dbReference type="ChEBI" id="CHEBI:57743"/>
    </ligand>
</feature>
<feature type="binding site" evidence="1">
    <location>
        <position position="265"/>
    </location>
    <ligand>
        <name>L-citrulline</name>
        <dbReference type="ChEBI" id="CHEBI:57743"/>
    </ligand>
</feature>
<proteinExistence type="inferred from homology"/>
<gene>
    <name evidence="1" type="primary">argG</name>
    <name type="ordered locus">TV0955</name>
    <name type="ORF">TVG0979194</name>
</gene>
<sequence>MKELLLLYSGGLDTSVMIKWMNENLGYDVSTLTLDIGNNDLKSIREKAEAIGAVETFVEDVKQEFSYEYISKSILANGSYEGYPLSTALARPLMAKKAVELAEKHGFEAIAHGSTGRGNDQVRFELGIKALNPSLEMLAPVRDWNMLRSEEIEYAKKNNIIVPSDGKYSVDENLWGRSIEGSEIENMSLPVPEDAYEWLVPPWEAGPGEVIKLEFSNGLPVAINDSDFELQNLIANLNIIGGRNSIGLIDHVEDRITGIKSREVYECPAAEIITYAHGYLESLILNKHEISIKSFLDSKFSQFVYNGLWYDPAMKPLIAGEEILNSEINGSISLKLYKGKIYFNGSKGANFSYNSNVANYSTYEFDQKSSKGFIDIFKNDTVYSILARQKAKEEALS</sequence>
<organism>
    <name type="scientific">Thermoplasma volcanium (strain ATCC 51530 / DSM 4299 / JCM 9571 / NBRC 15438 / GSS1)</name>
    <dbReference type="NCBI Taxonomy" id="273116"/>
    <lineage>
        <taxon>Archaea</taxon>
        <taxon>Methanobacteriati</taxon>
        <taxon>Thermoplasmatota</taxon>
        <taxon>Thermoplasmata</taxon>
        <taxon>Thermoplasmatales</taxon>
        <taxon>Thermoplasmataceae</taxon>
        <taxon>Thermoplasma</taxon>
    </lineage>
</organism>
<evidence type="ECO:0000255" key="1">
    <source>
        <dbReference type="HAMAP-Rule" id="MF_00005"/>
    </source>
</evidence>
<evidence type="ECO:0000305" key="2"/>
<dbReference type="EC" id="6.3.4.5" evidence="1"/>
<dbReference type="EMBL" id="BA000011">
    <property type="protein sequence ID" value="BAB60097.1"/>
    <property type="status" value="ALT_SEQ"/>
    <property type="molecule type" value="Genomic_DNA"/>
</dbReference>
<dbReference type="SMR" id="Q97A55"/>
<dbReference type="STRING" id="273116.gene:9381747"/>
<dbReference type="PaxDb" id="273116-14325172"/>
<dbReference type="KEGG" id="tvo:TVG0979194"/>
<dbReference type="eggNOG" id="arCOG00112">
    <property type="taxonomic scope" value="Archaea"/>
</dbReference>
<dbReference type="HOGENOM" id="CLU_032784_1_0_2"/>
<dbReference type="UniPathway" id="UPA00068">
    <property type="reaction ID" value="UER00113"/>
</dbReference>
<dbReference type="Proteomes" id="UP000001017">
    <property type="component" value="Chromosome"/>
</dbReference>
<dbReference type="GO" id="GO:0005737">
    <property type="term" value="C:cytoplasm"/>
    <property type="evidence" value="ECO:0007669"/>
    <property type="project" value="UniProtKB-SubCell"/>
</dbReference>
<dbReference type="GO" id="GO:0004055">
    <property type="term" value="F:argininosuccinate synthase activity"/>
    <property type="evidence" value="ECO:0007669"/>
    <property type="project" value="UniProtKB-UniRule"/>
</dbReference>
<dbReference type="GO" id="GO:0005524">
    <property type="term" value="F:ATP binding"/>
    <property type="evidence" value="ECO:0007669"/>
    <property type="project" value="UniProtKB-UniRule"/>
</dbReference>
<dbReference type="GO" id="GO:0000053">
    <property type="term" value="P:argininosuccinate metabolic process"/>
    <property type="evidence" value="ECO:0007669"/>
    <property type="project" value="TreeGrafter"/>
</dbReference>
<dbReference type="GO" id="GO:0006526">
    <property type="term" value="P:L-arginine biosynthetic process"/>
    <property type="evidence" value="ECO:0007669"/>
    <property type="project" value="UniProtKB-UniRule"/>
</dbReference>
<dbReference type="GO" id="GO:0000050">
    <property type="term" value="P:urea cycle"/>
    <property type="evidence" value="ECO:0007669"/>
    <property type="project" value="TreeGrafter"/>
</dbReference>
<dbReference type="CDD" id="cd01999">
    <property type="entry name" value="ASS"/>
    <property type="match status" value="1"/>
</dbReference>
<dbReference type="FunFam" id="3.40.50.620:FF:000019">
    <property type="entry name" value="Argininosuccinate synthase"/>
    <property type="match status" value="1"/>
</dbReference>
<dbReference type="Gene3D" id="3.90.1260.10">
    <property type="entry name" value="Argininosuccinate synthetase, chain A, domain 2"/>
    <property type="match status" value="1"/>
</dbReference>
<dbReference type="Gene3D" id="3.40.50.620">
    <property type="entry name" value="HUPs"/>
    <property type="match status" value="1"/>
</dbReference>
<dbReference type="HAMAP" id="MF_00005">
    <property type="entry name" value="Arg_succ_synth_type1"/>
    <property type="match status" value="1"/>
</dbReference>
<dbReference type="InterPro" id="IPR048268">
    <property type="entry name" value="Arginosuc_syn_C"/>
</dbReference>
<dbReference type="InterPro" id="IPR048267">
    <property type="entry name" value="Arginosuc_syn_N"/>
</dbReference>
<dbReference type="InterPro" id="IPR001518">
    <property type="entry name" value="Arginosuc_synth"/>
</dbReference>
<dbReference type="InterPro" id="IPR018223">
    <property type="entry name" value="Arginosuc_synth_CS"/>
</dbReference>
<dbReference type="InterPro" id="IPR023434">
    <property type="entry name" value="Arginosuc_synth_type_1_subfam"/>
</dbReference>
<dbReference type="InterPro" id="IPR024074">
    <property type="entry name" value="AS_cat/multimer_dom_body"/>
</dbReference>
<dbReference type="InterPro" id="IPR014729">
    <property type="entry name" value="Rossmann-like_a/b/a_fold"/>
</dbReference>
<dbReference type="NCBIfam" id="TIGR00032">
    <property type="entry name" value="argG"/>
    <property type="match status" value="1"/>
</dbReference>
<dbReference type="NCBIfam" id="NF001770">
    <property type="entry name" value="PRK00509.1"/>
    <property type="match status" value="1"/>
</dbReference>
<dbReference type="PANTHER" id="PTHR11587">
    <property type="entry name" value="ARGININOSUCCINATE SYNTHASE"/>
    <property type="match status" value="1"/>
</dbReference>
<dbReference type="PANTHER" id="PTHR11587:SF2">
    <property type="entry name" value="ARGININOSUCCINATE SYNTHASE"/>
    <property type="match status" value="1"/>
</dbReference>
<dbReference type="Pfam" id="PF20979">
    <property type="entry name" value="Arginosuc_syn_C"/>
    <property type="match status" value="1"/>
</dbReference>
<dbReference type="Pfam" id="PF00764">
    <property type="entry name" value="Arginosuc_synth"/>
    <property type="match status" value="1"/>
</dbReference>
<dbReference type="SUPFAM" id="SSF52402">
    <property type="entry name" value="Adenine nucleotide alpha hydrolases-like"/>
    <property type="match status" value="1"/>
</dbReference>
<dbReference type="SUPFAM" id="SSF69864">
    <property type="entry name" value="Argininosuccinate synthetase, C-terminal domain"/>
    <property type="match status" value="1"/>
</dbReference>
<dbReference type="PROSITE" id="PS00564">
    <property type="entry name" value="ARGININOSUCCIN_SYN_1"/>
    <property type="match status" value="1"/>
</dbReference>
<dbReference type="PROSITE" id="PS00565">
    <property type="entry name" value="ARGININOSUCCIN_SYN_2"/>
    <property type="match status" value="1"/>
</dbReference>
<keyword id="KW-0028">Amino-acid biosynthesis</keyword>
<keyword id="KW-0055">Arginine biosynthesis</keyword>
<keyword id="KW-0067">ATP-binding</keyword>
<keyword id="KW-0963">Cytoplasm</keyword>
<keyword id="KW-0436">Ligase</keyword>
<keyword id="KW-0547">Nucleotide-binding</keyword>
<protein>
    <recommendedName>
        <fullName evidence="1">Argininosuccinate synthase</fullName>
        <ecNumber evidence="1">6.3.4.5</ecNumber>
    </recommendedName>
    <alternativeName>
        <fullName evidence="1">Citrulline--aspartate ligase</fullName>
    </alternativeName>
</protein>
<accession>Q97A55</accession>
<reference key="1">
    <citation type="journal article" date="2000" name="Proc. Natl. Acad. Sci. U.S.A.">
        <title>Archaeal adaptation to higher temperatures revealed by genomic sequence of Thermoplasma volcanium.</title>
        <authorList>
            <person name="Kawashima T."/>
            <person name="Amano N."/>
            <person name="Koike H."/>
            <person name="Makino S."/>
            <person name="Higuchi S."/>
            <person name="Kawashima-Ohya Y."/>
            <person name="Watanabe K."/>
            <person name="Yamazaki M."/>
            <person name="Kanehori K."/>
            <person name="Kawamoto T."/>
            <person name="Nunoshiba T."/>
            <person name="Yamamoto Y."/>
            <person name="Aramaki H."/>
            <person name="Makino K."/>
            <person name="Suzuki M."/>
        </authorList>
    </citation>
    <scope>NUCLEOTIDE SEQUENCE [LARGE SCALE GENOMIC DNA]</scope>
    <source>
        <strain>ATCC 51530 / DSM 4299 / JCM 9571 / NBRC 15438 / GSS1</strain>
    </source>
</reference>
<name>ASSY_THEVO</name>
<comment type="catalytic activity">
    <reaction evidence="1">
        <text>L-citrulline + L-aspartate + ATP = 2-(N(omega)-L-arginino)succinate + AMP + diphosphate + H(+)</text>
        <dbReference type="Rhea" id="RHEA:10932"/>
        <dbReference type="ChEBI" id="CHEBI:15378"/>
        <dbReference type="ChEBI" id="CHEBI:29991"/>
        <dbReference type="ChEBI" id="CHEBI:30616"/>
        <dbReference type="ChEBI" id="CHEBI:33019"/>
        <dbReference type="ChEBI" id="CHEBI:57472"/>
        <dbReference type="ChEBI" id="CHEBI:57743"/>
        <dbReference type="ChEBI" id="CHEBI:456215"/>
        <dbReference type="EC" id="6.3.4.5"/>
    </reaction>
</comment>
<comment type="pathway">
    <text evidence="1">Amino-acid biosynthesis; L-arginine biosynthesis; L-arginine from L-ornithine and carbamoyl phosphate: step 2/3.</text>
</comment>
<comment type="subunit">
    <text evidence="1">Homotetramer.</text>
</comment>
<comment type="subcellular location">
    <subcellularLocation>
        <location evidence="1">Cytoplasm</location>
    </subcellularLocation>
</comment>
<comment type="similarity">
    <text evidence="1">Belongs to the argininosuccinate synthase family. Type 1 subfamily.</text>
</comment>
<comment type="sequence caution" evidence="2">
    <conflict type="erroneous termination">
        <sequence resource="EMBL-CDS" id="BAB60097"/>
    </conflict>
    <text>Truncated C-terminus.</text>
</comment>